<organism>
    <name type="scientific">Homo sapiens</name>
    <name type="common">Human</name>
    <dbReference type="NCBI Taxonomy" id="9606"/>
    <lineage>
        <taxon>Eukaryota</taxon>
        <taxon>Metazoa</taxon>
        <taxon>Chordata</taxon>
        <taxon>Craniata</taxon>
        <taxon>Vertebrata</taxon>
        <taxon>Euteleostomi</taxon>
        <taxon>Mammalia</taxon>
        <taxon>Eutheria</taxon>
        <taxon>Euarchontoglires</taxon>
        <taxon>Primates</taxon>
        <taxon>Haplorrhini</taxon>
        <taxon>Catarrhini</taxon>
        <taxon>Hominidae</taxon>
        <taxon>Homo</taxon>
    </lineage>
</organism>
<accession>Q5T5B0</accession>
<accession>A2RRM6</accession>
<keyword id="KW-0417">Keratinization</keyword>
<keyword id="KW-1267">Proteomics identification</keyword>
<keyword id="KW-1185">Reference proteome</keyword>
<gene>
    <name type="primary">LCE3E</name>
    <name type="synonym">LEP17</name>
</gene>
<protein>
    <recommendedName>
        <fullName>Late cornified envelope protein 3E</fullName>
    </recommendedName>
    <alternativeName>
        <fullName>Late envelope protein 17</fullName>
    </alternativeName>
</protein>
<evidence type="ECO:0000256" key="1">
    <source>
        <dbReference type="SAM" id="MobiDB-lite"/>
    </source>
</evidence>
<evidence type="ECO:0000269" key="2">
    <source>
    </source>
</evidence>
<evidence type="ECO:0000269" key="3">
    <source>
    </source>
</evidence>
<evidence type="ECO:0000305" key="4"/>
<name>LCE3E_HUMAN</name>
<proteinExistence type="evidence at protein level"/>
<reference key="1">
    <citation type="journal article" date="2006" name="Nature">
        <title>The DNA sequence and biological annotation of human chromosome 1.</title>
        <authorList>
            <person name="Gregory S.G."/>
            <person name="Barlow K.F."/>
            <person name="McLay K.E."/>
            <person name="Kaul R."/>
            <person name="Swarbreck D."/>
            <person name="Dunham A."/>
            <person name="Scott C.E."/>
            <person name="Howe K.L."/>
            <person name="Woodfine K."/>
            <person name="Spencer C.C.A."/>
            <person name="Jones M.C."/>
            <person name="Gillson C."/>
            <person name="Searle S."/>
            <person name="Zhou Y."/>
            <person name="Kokocinski F."/>
            <person name="McDonald L."/>
            <person name="Evans R."/>
            <person name="Phillips K."/>
            <person name="Atkinson A."/>
            <person name="Cooper R."/>
            <person name="Jones C."/>
            <person name="Hall R.E."/>
            <person name="Andrews T.D."/>
            <person name="Lloyd C."/>
            <person name="Ainscough R."/>
            <person name="Almeida J.P."/>
            <person name="Ambrose K.D."/>
            <person name="Anderson F."/>
            <person name="Andrew R.W."/>
            <person name="Ashwell R.I.S."/>
            <person name="Aubin K."/>
            <person name="Babbage A.K."/>
            <person name="Bagguley C.L."/>
            <person name="Bailey J."/>
            <person name="Beasley H."/>
            <person name="Bethel G."/>
            <person name="Bird C.P."/>
            <person name="Bray-Allen S."/>
            <person name="Brown J.Y."/>
            <person name="Brown A.J."/>
            <person name="Buckley D."/>
            <person name="Burton J."/>
            <person name="Bye J."/>
            <person name="Carder C."/>
            <person name="Chapman J.C."/>
            <person name="Clark S.Y."/>
            <person name="Clarke G."/>
            <person name="Clee C."/>
            <person name="Cobley V."/>
            <person name="Collier R.E."/>
            <person name="Corby N."/>
            <person name="Coville G.J."/>
            <person name="Davies J."/>
            <person name="Deadman R."/>
            <person name="Dunn M."/>
            <person name="Earthrowl M."/>
            <person name="Ellington A.G."/>
            <person name="Errington H."/>
            <person name="Frankish A."/>
            <person name="Frankland J."/>
            <person name="French L."/>
            <person name="Garner P."/>
            <person name="Garnett J."/>
            <person name="Gay L."/>
            <person name="Ghori M.R.J."/>
            <person name="Gibson R."/>
            <person name="Gilby L.M."/>
            <person name="Gillett W."/>
            <person name="Glithero R.J."/>
            <person name="Grafham D.V."/>
            <person name="Griffiths C."/>
            <person name="Griffiths-Jones S."/>
            <person name="Grocock R."/>
            <person name="Hammond S."/>
            <person name="Harrison E.S.I."/>
            <person name="Hart E."/>
            <person name="Haugen E."/>
            <person name="Heath P.D."/>
            <person name="Holmes S."/>
            <person name="Holt K."/>
            <person name="Howden P.J."/>
            <person name="Hunt A.R."/>
            <person name="Hunt S.E."/>
            <person name="Hunter G."/>
            <person name="Isherwood J."/>
            <person name="James R."/>
            <person name="Johnson C."/>
            <person name="Johnson D."/>
            <person name="Joy A."/>
            <person name="Kay M."/>
            <person name="Kershaw J.K."/>
            <person name="Kibukawa M."/>
            <person name="Kimberley A.M."/>
            <person name="King A."/>
            <person name="Knights A.J."/>
            <person name="Lad H."/>
            <person name="Laird G."/>
            <person name="Lawlor S."/>
            <person name="Leongamornlert D.A."/>
            <person name="Lloyd D.M."/>
            <person name="Loveland J."/>
            <person name="Lovell J."/>
            <person name="Lush M.J."/>
            <person name="Lyne R."/>
            <person name="Martin S."/>
            <person name="Mashreghi-Mohammadi M."/>
            <person name="Matthews L."/>
            <person name="Matthews N.S.W."/>
            <person name="McLaren S."/>
            <person name="Milne S."/>
            <person name="Mistry S."/>
            <person name="Moore M.J.F."/>
            <person name="Nickerson T."/>
            <person name="O'Dell C.N."/>
            <person name="Oliver K."/>
            <person name="Palmeiri A."/>
            <person name="Palmer S.A."/>
            <person name="Parker A."/>
            <person name="Patel D."/>
            <person name="Pearce A.V."/>
            <person name="Peck A.I."/>
            <person name="Pelan S."/>
            <person name="Phelps K."/>
            <person name="Phillimore B.J."/>
            <person name="Plumb R."/>
            <person name="Rajan J."/>
            <person name="Raymond C."/>
            <person name="Rouse G."/>
            <person name="Saenphimmachak C."/>
            <person name="Sehra H.K."/>
            <person name="Sheridan E."/>
            <person name="Shownkeen R."/>
            <person name="Sims S."/>
            <person name="Skuce C.D."/>
            <person name="Smith M."/>
            <person name="Steward C."/>
            <person name="Subramanian S."/>
            <person name="Sycamore N."/>
            <person name="Tracey A."/>
            <person name="Tromans A."/>
            <person name="Van Helmond Z."/>
            <person name="Wall M."/>
            <person name="Wallis J.M."/>
            <person name="White S."/>
            <person name="Whitehead S.L."/>
            <person name="Wilkinson J.E."/>
            <person name="Willey D.L."/>
            <person name="Williams H."/>
            <person name="Wilming L."/>
            <person name="Wray P.W."/>
            <person name="Wu Z."/>
            <person name="Coulson A."/>
            <person name="Vaudin M."/>
            <person name="Sulston J.E."/>
            <person name="Durbin R.M."/>
            <person name="Hubbard T."/>
            <person name="Wooster R."/>
            <person name="Dunham I."/>
            <person name="Carter N.P."/>
            <person name="McVean G."/>
            <person name="Ross M.T."/>
            <person name="Harrow J."/>
            <person name="Olson M.V."/>
            <person name="Beck S."/>
            <person name="Rogers J."/>
            <person name="Bentley D.R."/>
        </authorList>
    </citation>
    <scope>NUCLEOTIDE SEQUENCE [LARGE SCALE GENOMIC DNA]</scope>
</reference>
<reference key="2">
    <citation type="submission" date="2005-09" db="EMBL/GenBank/DDBJ databases">
        <authorList>
            <person name="Mural R.J."/>
            <person name="Istrail S."/>
            <person name="Sutton G.G."/>
            <person name="Florea L."/>
            <person name="Halpern A.L."/>
            <person name="Mobarry C.M."/>
            <person name="Lippert R."/>
            <person name="Walenz B."/>
            <person name="Shatkay H."/>
            <person name="Dew I."/>
            <person name="Miller J.R."/>
            <person name="Flanigan M.J."/>
            <person name="Edwards N.J."/>
            <person name="Bolanos R."/>
            <person name="Fasulo D."/>
            <person name="Halldorsson B.V."/>
            <person name="Hannenhalli S."/>
            <person name="Turner R."/>
            <person name="Yooseph S."/>
            <person name="Lu F."/>
            <person name="Nusskern D.R."/>
            <person name="Shue B.C."/>
            <person name="Zheng X.H."/>
            <person name="Zhong F."/>
            <person name="Delcher A.L."/>
            <person name="Huson D.H."/>
            <person name="Kravitz S.A."/>
            <person name="Mouchard L."/>
            <person name="Reinert K."/>
            <person name="Remington K.A."/>
            <person name="Clark A.G."/>
            <person name="Waterman M.S."/>
            <person name="Eichler E.E."/>
            <person name="Adams M.D."/>
            <person name="Hunkapiller M.W."/>
            <person name="Myers E.W."/>
            <person name="Venter J.C."/>
        </authorList>
    </citation>
    <scope>NUCLEOTIDE SEQUENCE [LARGE SCALE GENOMIC DNA]</scope>
</reference>
<reference key="3">
    <citation type="journal article" date="2004" name="Genome Res.">
        <title>The status, quality, and expansion of the NIH full-length cDNA project: the Mammalian Gene Collection (MGC).</title>
        <authorList>
            <consortium name="The MGC Project Team"/>
        </authorList>
    </citation>
    <scope>NUCLEOTIDE SEQUENCE [LARGE SCALE MRNA]</scope>
</reference>
<reference key="4">
    <citation type="journal article" date="2005" name="J. Invest. Dermatol.">
        <title>Late cornified envelope family in differentiating epithelia -- response to calcium and ultraviolet irradiation.</title>
        <authorList>
            <person name="Jackson B."/>
            <person name="Tilli C.L."/>
            <person name="Hardman M."/>
            <person name="Avilion A."/>
            <person name="Macleod M."/>
            <person name="Ashcroft G."/>
            <person name="Byrne C."/>
        </authorList>
    </citation>
    <scope>NOMENCLATURE</scope>
    <scope>TISSUE SPECIFICITY</scope>
    <scope>INDUCTION BY UVB</scope>
</reference>
<reference key="5">
    <citation type="journal article" date="2023" name="J. Invest. Dermatol.">
        <title>CYSRT1: An Antimicrobial Epidermal Protein that Can Interact with Late Cornified Envelope Proteins.</title>
        <authorList>
            <person name="Niehues H."/>
            <person name="Rikken G."/>
            <person name="Kersten F.F.J."/>
            <person name="Eeftens J.M."/>
            <person name="van Vlijmen-Willems I.M.J.J."/>
            <person name="Rodijk-Olthuis D."/>
            <person name="Jansen P.A.M."/>
            <person name="Hendriks W.J.A.J."/>
            <person name="Ederveen T.H.A."/>
            <person name="Schalkwijk J."/>
            <person name="van den Bogaard E.H."/>
            <person name="Zeeuwen P.L.J.M."/>
        </authorList>
    </citation>
    <scope>INTERACTION WITH CYSRT1</scope>
</reference>
<dbReference type="EMBL" id="AL356426">
    <property type="status" value="NOT_ANNOTATED_CDS"/>
    <property type="molecule type" value="Genomic_DNA"/>
</dbReference>
<dbReference type="EMBL" id="CH471121">
    <property type="protein sequence ID" value="EAW53378.1"/>
    <property type="molecule type" value="Genomic_DNA"/>
</dbReference>
<dbReference type="EMBL" id="BC131716">
    <property type="protein sequence ID" value="AAI31717.1"/>
    <property type="molecule type" value="mRNA"/>
</dbReference>
<dbReference type="CCDS" id="CCDS1013.1"/>
<dbReference type="RefSeq" id="NP_848522.1">
    <property type="nucleotide sequence ID" value="NM_178435.4"/>
</dbReference>
<dbReference type="RefSeq" id="XP_011507786.1">
    <property type="nucleotide sequence ID" value="XM_011509484.1"/>
</dbReference>
<dbReference type="BioGRID" id="131651">
    <property type="interactions" value="59"/>
</dbReference>
<dbReference type="FunCoup" id="Q5T5B0">
    <property type="interactions" value="22"/>
</dbReference>
<dbReference type="IntAct" id="Q5T5B0">
    <property type="interactions" value="49"/>
</dbReference>
<dbReference type="STRING" id="9606.ENSP00000357778"/>
<dbReference type="iPTMnet" id="Q5T5B0"/>
<dbReference type="PhosphoSitePlus" id="Q5T5B0"/>
<dbReference type="BioMuta" id="LCE3E"/>
<dbReference type="DMDM" id="74745052"/>
<dbReference type="MassIVE" id="Q5T5B0"/>
<dbReference type="PaxDb" id="9606-ENSP00000357778"/>
<dbReference type="PeptideAtlas" id="Q5T5B0"/>
<dbReference type="Antibodypedia" id="82209">
    <property type="antibodies" value="1 antibodies from 1 providers"/>
</dbReference>
<dbReference type="DNASU" id="353145"/>
<dbReference type="Ensembl" id="ENST00000368789.2">
    <property type="protein sequence ID" value="ENSP00000357778.1"/>
    <property type="gene ID" value="ENSG00000185966.4"/>
</dbReference>
<dbReference type="GeneID" id="353145"/>
<dbReference type="KEGG" id="hsa:353145"/>
<dbReference type="MANE-Select" id="ENST00000368789.2">
    <property type="protein sequence ID" value="ENSP00000357778.1"/>
    <property type="RefSeq nucleotide sequence ID" value="NM_178435.4"/>
    <property type="RefSeq protein sequence ID" value="NP_848522.1"/>
</dbReference>
<dbReference type="UCSC" id="uc001faa.5">
    <property type="organism name" value="human"/>
</dbReference>
<dbReference type="AGR" id="HGNC:29463"/>
<dbReference type="CTD" id="353145"/>
<dbReference type="DisGeNET" id="353145"/>
<dbReference type="GeneCards" id="LCE3E"/>
<dbReference type="HGNC" id="HGNC:29463">
    <property type="gene designation" value="LCE3E"/>
</dbReference>
<dbReference type="HPA" id="ENSG00000185966">
    <property type="expression patterns" value="Tissue enhanced (cervix, vagina)"/>
</dbReference>
<dbReference type="MIM" id="612617">
    <property type="type" value="gene"/>
</dbReference>
<dbReference type="neXtProt" id="NX_Q5T5B0"/>
<dbReference type="OpenTargets" id="ENSG00000185966"/>
<dbReference type="PharmGKB" id="PA134941153"/>
<dbReference type="VEuPathDB" id="HostDB:ENSG00000185966"/>
<dbReference type="eggNOG" id="ENOG502TDZ9">
    <property type="taxonomic scope" value="Eukaryota"/>
</dbReference>
<dbReference type="GeneTree" id="ENSGT00940000163905"/>
<dbReference type="HOGENOM" id="CLU_152038_1_0_1"/>
<dbReference type="InParanoid" id="Q5T5B0"/>
<dbReference type="OMA" id="HGSGSCC"/>
<dbReference type="PAN-GO" id="Q5T5B0">
    <property type="GO annotations" value="0 GO annotations based on evolutionary models"/>
</dbReference>
<dbReference type="TreeFam" id="TF338709"/>
<dbReference type="PathwayCommons" id="Q5T5B0"/>
<dbReference type="Reactome" id="R-HSA-6809371">
    <property type="pathway name" value="Formation of the cornified envelope"/>
</dbReference>
<dbReference type="SignaLink" id="Q5T5B0"/>
<dbReference type="BioGRID-ORCS" id="353145">
    <property type="hits" value="9 hits in 682 CRISPR screens"/>
</dbReference>
<dbReference type="GenomeRNAi" id="353145"/>
<dbReference type="Pharos" id="Q5T5B0">
    <property type="development level" value="Tdark"/>
</dbReference>
<dbReference type="PRO" id="PR:Q5T5B0"/>
<dbReference type="Proteomes" id="UP000005640">
    <property type="component" value="Chromosome 1"/>
</dbReference>
<dbReference type="RNAct" id="Q5T5B0">
    <property type="molecule type" value="protein"/>
</dbReference>
<dbReference type="Bgee" id="ENSG00000185966">
    <property type="expression patterns" value="Expressed in skin of leg and 24 other cell types or tissues"/>
</dbReference>
<dbReference type="GO" id="GO:0031424">
    <property type="term" value="P:keratinization"/>
    <property type="evidence" value="ECO:0007669"/>
    <property type="project" value="UniProtKB-KW"/>
</dbReference>
<dbReference type="InterPro" id="IPR028205">
    <property type="entry name" value="LCE"/>
</dbReference>
<dbReference type="Pfam" id="PF14672">
    <property type="entry name" value="LCE"/>
    <property type="match status" value="1"/>
</dbReference>
<comment type="function">
    <text>Precursors of the cornified envelope of the stratum corneum.</text>
</comment>
<comment type="subunit">
    <text evidence="3">Interacts with CYSRT1.</text>
</comment>
<comment type="interaction">
    <interactant intactId="EBI-10245456">
        <id>Q5T5B0</id>
    </interactant>
    <interactant intactId="EBI-10173507">
        <id>Q6UY14-3</id>
        <label>ADAMTSL4</label>
    </interactant>
    <organismsDiffer>false</organismsDiffer>
    <experiments>6</experiments>
</comment>
<comment type="interaction">
    <interactant intactId="EBI-10245456">
        <id>Q5T5B0</id>
    </interactant>
    <interactant intactId="EBI-1211484">
        <id>P05187</id>
        <label>ALPP</label>
    </interactant>
    <organismsDiffer>false</organismsDiffer>
    <experiments>3</experiments>
</comment>
<comment type="interaction">
    <interactant intactId="EBI-10245456">
        <id>Q5T5B0</id>
    </interactant>
    <interactant intactId="EBI-3867333">
        <id>A8MQ03</id>
        <label>CYSRT1</label>
    </interactant>
    <organismsDiffer>false</organismsDiffer>
    <experiments>8</experiments>
</comment>
<comment type="interaction">
    <interactant intactId="EBI-10245456">
        <id>Q5T5B0</id>
    </interactant>
    <interactant intactId="EBI-743414">
        <id>O95967</id>
        <label>EFEMP2</label>
    </interactant>
    <organismsDiffer>false</organismsDiffer>
    <experiments>3</experiments>
</comment>
<comment type="interaction">
    <interactant intactId="EBI-10245456">
        <id>Q5T5B0</id>
    </interactant>
    <interactant intactId="EBI-747754">
        <id>P28799</id>
        <label>GRN</label>
    </interactant>
    <organismsDiffer>false</organismsDiffer>
    <experiments>3</experiments>
</comment>
<comment type="interaction">
    <interactant intactId="EBI-10245456">
        <id>Q5T5B0</id>
    </interactant>
    <interactant intactId="EBI-19954058">
        <id>O15499</id>
        <label>GSC2</label>
    </interactant>
    <organismsDiffer>false</organismsDiffer>
    <experiments>3</experiments>
</comment>
<comment type="interaction">
    <interactant intactId="EBI-10245456">
        <id>Q5T5B0</id>
    </interactant>
    <interactant intactId="EBI-740785">
        <id>P49639</id>
        <label>HOXA1</label>
    </interactant>
    <organismsDiffer>false</organismsDiffer>
    <experiments>3</experiments>
</comment>
<comment type="interaction">
    <interactant intactId="EBI-10245456">
        <id>Q5T5B0</id>
    </interactant>
    <interactant intactId="EBI-10981970">
        <id>Q5T749</id>
        <label>KPRP</label>
    </interactant>
    <organismsDiffer>false</organismsDiffer>
    <experiments>3</experiments>
</comment>
<comment type="interaction">
    <interactant intactId="EBI-10245456">
        <id>Q5T5B0</id>
    </interactant>
    <interactant intactId="EBI-948001">
        <id>Q15323</id>
        <label>KRT31</label>
    </interactant>
    <organismsDiffer>false</organismsDiffer>
    <experiments>3</experiments>
</comment>
<comment type="interaction">
    <interactant intactId="EBI-10245456">
        <id>Q5T5B0</id>
    </interactant>
    <interactant intactId="EBI-10171697">
        <id>Q6A162</id>
        <label>KRT40</label>
    </interactant>
    <organismsDiffer>false</organismsDiffer>
    <experiments>3</experiments>
</comment>
<comment type="interaction">
    <interactant intactId="EBI-10245456">
        <id>Q5T5B0</id>
    </interactant>
    <interactant intactId="EBI-11959885">
        <id>Q07627</id>
        <label>KRTAP1-1</label>
    </interactant>
    <organismsDiffer>false</organismsDiffer>
    <experiments>3</experiments>
</comment>
<comment type="interaction">
    <interactant intactId="EBI-10245456">
        <id>Q5T5B0</id>
    </interactant>
    <interactant intactId="EBI-11749135">
        <id>Q8IUG1</id>
        <label>KRTAP1-3</label>
    </interactant>
    <organismsDiffer>false</organismsDiffer>
    <experiments>3</experiments>
</comment>
<comment type="interaction">
    <interactant intactId="EBI-10245456">
        <id>Q5T5B0</id>
    </interactant>
    <interactant intactId="EBI-10172150">
        <id>P60370</id>
        <label>KRTAP10-5</label>
    </interactant>
    <organismsDiffer>false</organismsDiffer>
    <experiments>8</experiments>
</comment>
<comment type="interaction">
    <interactant intactId="EBI-10245456">
        <id>Q5T5B0</id>
    </interactant>
    <interactant intactId="EBI-12012928">
        <id>P60371</id>
        <label>KRTAP10-6</label>
    </interactant>
    <organismsDiffer>false</organismsDiffer>
    <experiments>3</experiments>
</comment>
<comment type="interaction">
    <interactant intactId="EBI-10245456">
        <id>Q5T5B0</id>
    </interactant>
    <interactant intactId="EBI-10172290">
        <id>P60409</id>
        <label>KRTAP10-7</label>
    </interactant>
    <organismsDiffer>false</organismsDiffer>
    <experiments>8</experiments>
</comment>
<comment type="interaction">
    <interactant intactId="EBI-10245456">
        <id>Q5T5B0</id>
    </interactant>
    <interactant intactId="EBI-10171774">
        <id>P60410</id>
        <label>KRTAP10-8</label>
    </interactant>
    <organismsDiffer>false</organismsDiffer>
    <experiments>11</experiments>
</comment>
<comment type="interaction">
    <interactant intactId="EBI-10245456">
        <id>Q5T5B0</id>
    </interactant>
    <interactant intactId="EBI-10172052">
        <id>P60411</id>
        <label>KRTAP10-9</label>
    </interactant>
    <organismsDiffer>false</organismsDiffer>
    <experiments>7</experiments>
</comment>
<comment type="interaction">
    <interactant intactId="EBI-10245456">
        <id>Q5T5B0</id>
    </interactant>
    <interactant intactId="EBI-11953334">
        <id>P60328</id>
        <label>KRTAP12-3</label>
    </interactant>
    <organismsDiffer>false</organismsDiffer>
    <experiments>3</experiments>
</comment>
<comment type="interaction">
    <interactant intactId="EBI-10245456">
        <id>Q5T5B0</id>
    </interactant>
    <interactant intactId="EBI-751260">
        <id>Q9BYR7</id>
        <label>KRTAP3-2</label>
    </interactant>
    <organismsDiffer>false</organismsDiffer>
    <experiments>3</experiments>
</comment>
<comment type="interaction">
    <interactant intactId="EBI-10245456">
        <id>Q5T5B0</id>
    </interactant>
    <interactant intactId="EBI-3957694">
        <id>Q9BYR6</id>
        <label>KRTAP3-3</label>
    </interactant>
    <organismsDiffer>false</organismsDiffer>
    <experiments>3</experiments>
</comment>
<comment type="interaction">
    <interactant intactId="EBI-10245456">
        <id>Q5T5B0</id>
    </interactant>
    <interactant intactId="EBI-34579671">
        <id>Q9BYQ7</id>
        <label>KRTAP4-1</label>
    </interactant>
    <organismsDiffer>false</organismsDiffer>
    <experiments>3</experiments>
</comment>
<comment type="interaction">
    <interactant intactId="EBI-10245456">
        <id>Q5T5B0</id>
    </interactant>
    <interactant intactId="EBI-10302392">
        <id>Q9BYQ6</id>
        <label>KRTAP4-11</label>
    </interactant>
    <organismsDiffer>false</organismsDiffer>
    <experiments>3</experiments>
</comment>
<comment type="interaction">
    <interactant intactId="EBI-10245456">
        <id>Q5T5B0</id>
    </interactant>
    <interactant intactId="EBI-739863">
        <id>Q9BQ66</id>
        <label>KRTAP4-12</label>
    </interactant>
    <organismsDiffer>false</organismsDiffer>
    <experiments>9</experiments>
</comment>
<comment type="interaction">
    <interactant intactId="EBI-10245456">
        <id>Q5T5B0</id>
    </interactant>
    <interactant intactId="EBI-10172511">
        <id>Q9BYR5</id>
        <label>KRTAP4-2</label>
    </interactant>
    <organismsDiffer>false</organismsDiffer>
    <experiments>6</experiments>
</comment>
<comment type="interaction">
    <interactant intactId="EBI-10245456">
        <id>Q5T5B0</id>
    </interactant>
    <interactant intactId="EBI-11958132">
        <id>Q9BYR3</id>
        <label>KRTAP4-4</label>
    </interactant>
    <organismsDiffer>false</organismsDiffer>
    <experiments>3</experiments>
</comment>
<comment type="interaction">
    <interactant intactId="EBI-10245456">
        <id>Q5T5B0</id>
    </interactant>
    <interactant intactId="EBI-11993254">
        <id>Q9BYR2</id>
        <label>KRTAP4-5</label>
    </interactant>
    <organismsDiffer>false</organismsDiffer>
    <experiments>5</experiments>
</comment>
<comment type="interaction">
    <interactant intactId="EBI-10245456">
        <id>Q5T5B0</id>
    </interactant>
    <interactant intactId="EBI-11993296">
        <id>Q6L8G4</id>
        <label>KRTAP5-11</label>
    </interactant>
    <organismsDiffer>false</organismsDiffer>
    <experiments>3</experiments>
</comment>
<comment type="interaction">
    <interactant intactId="EBI-10245456">
        <id>Q5T5B0</id>
    </interactant>
    <interactant intactId="EBI-11958178">
        <id>Q701N4</id>
        <label>KRTAP5-2</label>
    </interactant>
    <organismsDiffer>false</organismsDiffer>
    <experiments>3</experiments>
</comment>
<comment type="interaction">
    <interactant intactId="EBI-10245456">
        <id>Q5T5B0</id>
    </interactant>
    <interactant intactId="EBI-11974251">
        <id>Q6L8H2</id>
        <label>KRTAP5-3</label>
    </interactant>
    <organismsDiffer>false</organismsDiffer>
    <experiments>3</experiments>
</comment>
<comment type="interaction">
    <interactant intactId="EBI-10245456">
        <id>Q5T5B0</id>
    </interactant>
    <interactant intactId="EBI-10250562">
        <id>Q6L8G9</id>
        <label>KRTAP5-6</label>
    </interactant>
    <organismsDiffer>false</organismsDiffer>
    <experiments>3</experiments>
</comment>
<comment type="interaction">
    <interactant intactId="EBI-10245456">
        <id>Q5T5B0</id>
    </interactant>
    <interactant intactId="EBI-11987425">
        <id>Q6L8G8</id>
        <label>KRTAP5-7</label>
    </interactant>
    <organismsDiffer>false</organismsDiffer>
    <experiments>3</experiments>
</comment>
<comment type="interaction">
    <interactant intactId="EBI-10245456">
        <id>Q5T5B0</id>
    </interactant>
    <interactant intactId="EBI-3958099">
        <id>P26371</id>
        <label>KRTAP5-9</label>
    </interactant>
    <organismsDiffer>false</organismsDiffer>
    <experiments>9</experiments>
</comment>
<comment type="interaction">
    <interactant intactId="EBI-10245456">
        <id>Q5T5B0</id>
    </interactant>
    <interactant intactId="EBI-22311199">
        <id>Q3LI67</id>
        <label>KRTAP6-3</label>
    </interactant>
    <organismsDiffer>false</organismsDiffer>
    <experiments>3</experiments>
</comment>
<comment type="interaction">
    <interactant intactId="EBI-10245456">
        <id>Q5T5B0</id>
    </interactant>
    <interactant intactId="EBI-1044640">
        <id>Q9BYQ4</id>
        <label>KRTAP9-2</label>
    </interactant>
    <organismsDiffer>false</organismsDiffer>
    <experiments>6</experiments>
</comment>
<comment type="interaction">
    <interactant intactId="EBI-10245456">
        <id>Q5T5B0</id>
    </interactant>
    <interactant intactId="EBI-1043191">
        <id>Q9BYQ3</id>
        <label>KRTAP9-3</label>
    </interactant>
    <organismsDiffer>false</organismsDiffer>
    <experiments>6</experiments>
</comment>
<comment type="interaction">
    <interactant intactId="EBI-10245456">
        <id>Q5T5B0</id>
    </interactant>
    <interactant intactId="EBI-10185730">
        <id>Q9BYQ2</id>
        <label>KRTAP9-4</label>
    </interactant>
    <organismsDiffer>false</organismsDiffer>
    <experiments>3</experiments>
</comment>
<comment type="interaction">
    <interactant intactId="EBI-10245456">
        <id>Q5T5B0</id>
    </interactant>
    <interactant intactId="EBI-11958364">
        <id>Q9BYQ0</id>
        <label>KRTAP9-8</label>
    </interactant>
    <organismsDiffer>false</organismsDiffer>
    <experiments>5</experiments>
</comment>
<comment type="interaction">
    <interactant intactId="EBI-10245456">
        <id>Q5T5B0</id>
    </interactant>
    <interactant intactId="EBI-2683507">
        <id>Q8N5G2</id>
        <label>MACO1</label>
    </interactant>
    <organismsDiffer>false</organismsDiffer>
    <experiments>3</experiments>
</comment>
<comment type="interaction">
    <interactant intactId="EBI-10245456">
        <id>Q5T5B0</id>
    </interactant>
    <interactant intactId="EBI-724076">
        <id>Q99750</id>
        <label>MDFI</label>
    </interactant>
    <organismsDiffer>false</organismsDiffer>
    <experiments>8</experiments>
</comment>
<comment type="interaction">
    <interactant intactId="EBI-10245456">
        <id>Q5T5B0</id>
    </interactant>
    <interactant intactId="EBI-945833">
        <id>Q7Z3S9</id>
        <label>NOTCH2NLA</label>
    </interactant>
    <organismsDiffer>false</organismsDiffer>
    <experiments>4</experiments>
</comment>
<comment type="interaction">
    <interactant intactId="EBI-10245456">
        <id>Q5T5B0</id>
    </interactant>
    <interactant intactId="EBI-22310682">
        <id>P0DPK4</id>
        <label>NOTCH2NLC</label>
    </interactant>
    <organismsDiffer>false</organismsDiffer>
    <experiments>3</experiments>
</comment>
<comment type="interaction">
    <interactant intactId="EBI-10245456">
        <id>Q5T5B0</id>
    </interactant>
    <interactant intactId="EBI-398874">
        <id>Q9UBU9</id>
        <label>NXF1</label>
    </interactant>
    <organismsDiffer>false</organismsDiffer>
    <experiments>3</experiments>
</comment>
<comment type="interaction">
    <interactant intactId="EBI-10245456">
        <id>Q5T5B0</id>
    </interactant>
    <interactant intactId="EBI-3937430">
        <id>Q9NRY7</id>
        <label>PLSCR2</label>
    </interactant>
    <organismsDiffer>false</organismsDiffer>
    <experiments>3</experiments>
</comment>
<comment type="interaction">
    <interactant intactId="EBI-10245456">
        <id>Q5T5B0</id>
    </interactant>
    <interactant intactId="EBI-3918154">
        <id>Q9UGC6</id>
        <label>RGS17</label>
    </interactant>
    <organismsDiffer>false</organismsDiffer>
    <experiments>3</experiments>
</comment>
<comment type="interaction">
    <interactant intactId="EBI-10245456">
        <id>Q5T5B0</id>
    </interactant>
    <interactant intactId="EBI-1052678">
        <id>O76081</id>
        <label>RGS20</label>
    </interactant>
    <organismsDiffer>false</organismsDiffer>
    <experiments>3</experiments>
</comment>
<comment type="interaction">
    <interactant intactId="EBI-10245456">
        <id>Q5T5B0</id>
    </interactant>
    <interactant intactId="EBI-10178530">
        <id>O76081-6</id>
        <label>RGS20</label>
    </interactant>
    <organismsDiffer>false</organismsDiffer>
    <experiments>6</experiments>
</comment>
<comment type="interaction">
    <interactant intactId="EBI-10245456">
        <id>Q5T5B0</id>
    </interactant>
    <interactant intactId="EBI-742487">
        <id>O43597</id>
        <label>SPRY2</label>
    </interactant>
    <organismsDiffer>false</organismsDiffer>
    <experiments>3</experiments>
</comment>
<comment type="interaction">
    <interactant intactId="EBI-10245456">
        <id>Q5T5B0</id>
    </interactant>
    <interactant intactId="EBI-12290641">
        <id>O43610</id>
        <label>SPRY3</label>
    </interactant>
    <organismsDiffer>false</organismsDiffer>
    <experiments>3</experiments>
</comment>
<comment type="interaction">
    <interactant intactId="EBI-10245456">
        <id>Q5T5B0</id>
    </interactant>
    <interactant intactId="EBI-5235829">
        <id>Q8IWZ5</id>
        <label>TRIM42</label>
    </interactant>
    <organismsDiffer>false</organismsDiffer>
    <experiments>3</experiments>
</comment>
<comment type="interaction">
    <interactant intactId="EBI-10245456">
        <id>Q5T5B0</id>
    </interactant>
    <interactant intactId="EBI-11957238">
        <id>Q2TAL6</id>
        <label>VWC2</label>
    </interactant>
    <organismsDiffer>false</organismsDiffer>
    <experiments>3</experiments>
</comment>
<comment type="tissue specificity">
    <text evidence="2">Skin-specific. Expression was readily detected in adult trunk skin, adult arm skin, fetal skin, penal skin, vulva, esophagus and tongue. Not expressed in the cervix, rectum, lung, colon, or placenta.</text>
</comment>
<comment type="induction">
    <text evidence="2">By UVB.</text>
</comment>
<comment type="miscellaneous">
    <text>Belongs to the LCE cluster present on 1q21.</text>
</comment>
<comment type="similarity">
    <text evidence="4">Belongs to the LCE family.</text>
</comment>
<sequence length="92" mass="9507">MSCQQNQKQCQPPPKCPSPKCPPKNPVQCLPPASSGCAPSSGGCGPSSEGGCFLNHHRRHHRCRRQRSNSCDRGSGQQGGGSGCCHGSGGCC</sequence>
<feature type="chain" id="PRO_0000235337" description="Late cornified envelope protein 3E">
    <location>
        <begin position="1"/>
        <end position="92"/>
    </location>
</feature>
<feature type="region of interest" description="Disordered" evidence="1">
    <location>
        <begin position="1"/>
        <end position="22"/>
    </location>
</feature>
<feature type="region of interest" description="Disordered" evidence="1">
    <location>
        <begin position="64"/>
        <end position="92"/>
    </location>
</feature>
<feature type="compositionally biased region" description="Low complexity" evidence="1">
    <location>
        <begin position="1"/>
        <end position="10"/>
    </location>
</feature>
<feature type="compositionally biased region" description="Pro residues" evidence="1">
    <location>
        <begin position="11"/>
        <end position="22"/>
    </location>
</feature>
<feature type="compositionally biased region" description="Gly residues" evidence="1">
    <location>
        <begin position="76"/>
        <end position="92"/>
    </location>
</feature>